<name>TRPM7_RAT</name>
<reference evidence="11 12" key="1">
    <citation type="journal article" date="2001" name="Science">
        <title>TRP-PLIK, a bifunctional protein with kinase and ion channel activities.</title>
        <authorList>
            <person name="Runnels L.W."/>
            <person name="Yue L."/>
            <person name="Clapham D.E."/>
        </authorList>
    </citation>
    <scope>NUCLEOTIDE SEQUENCE [MRNA] (ISOFORM 2)</scope>
    <scope>FUNCTION</scope>
    <scope>INTERACTION WITH PLCB1</scope>
    <source>
        <strain evidence="12">Sprague-Dawley</strain>
        <tissue evidence="6">Brain</tissue>
    </source>
</reference>
<reference evidence="11" key="2">
    <citation type="journal article" date="2004" name="Nature">
        <title>Genome sequence of the Brown Norway rat yields insights into mammalian evolution.</title>
        <authorList>
            <person name="Gibbs R.A."/>
            <person name="Weinstock G.M."/>
            <person name="Metzker M.L."/>
            <person name="Muzny D.M."/>
            <person name="Sodergren E.J."/>
            <person name="Scherer S."/>
            <person name="Scott G."/>
            <person name="Steffen D."/>
            <person name="Worley K.C."/>
            <person name="Burch P.E."/>
            <person name="Okwuonu G."/>
            <person name="Hines S."/>
            <person name="Lewis L."/>
            <person name="Deramo C."/>
            <person name="Delgado O."/>
            <person name="Dugan-Rocha S."/>
            <person name="Miner G."/>
            <person name="Morgan M."/>
            <person name="Hawes A."/>
            <person name="Gill R."/>
            <person name="Holt R.A."/>
            <person name="Adams M.D."/>
            <person name="Amanatides P.G."/>
            <person name="Baden-Tillson H."/>
            <person name="Barnstead M."/>
            <person name="Chin S."/>
            <person name="Evans C.A."/>
            <person name="Ferriera S."/>
            <person name="Fosler C."/>
            <person name="Glodek A."/>
            <person name="Gu Z."/>
            <person name="Jennings D."/>
            <person name="Kraft C.L."/>
            <person name="Nguyen T."/>
            <person name="Pfannkoch C.M."/>
            <person name="Sitter C."/>
            <person name="Sutton G.G."/>
            <person name="Venter J.C."/>
            <person name="Woodage T."/>
            <person name="Smith D."/>
            <person name="Lee H.-M."/>
            <person name="Gustafson E."/>
            <person name="Cahill P."/>
            <person name="Kana A."/>
            <person name="Doucette-Stamm L."/>
            <person name="Weinstock K."/>
            <person name="Fechtel K."/>
            <person name="Weiss R.B."/>
            <person name="Dunn D.M."/>
            <person name="Green E.D."/>
            <person name="Blakesley R.W."/>
            <person name="Bouffard G.G."/>
            <person name="De Jong P.J."/>
            <person name="Osoegawa K."/>
            <person name="Zhu B."/>
            <person name="Marra M."/>
            <person name="Schein J."/>
            <person name="Bosdet I."/>
            <person name="Fjell C."/>
            <person name="Jones S."/>
            <person name="Krzywinski M."/>
            <person name="Mathewson C."/>
            <person name="Siddiqui A."/>
            <person name="Wye N."/>
            <person name="McPherson J."/>
            <person name="Zhao S."/>
            <person name="Fraser C.M."/>
            <person name="Shetty J."/>
            <person name="Shatsman S."/>
            <person name="Geer K."/>
            <person name="Chen Y."/>
            <person name="Abramzon S."/>
            <person name="Nierman W.C."/>
            <person name="Havlak P.H."/>
            <person name="Chen R."/>
            <person name="Durbin K.J."/>
            <person name="Egan A."/>
            <person name="Ren Y."/>
            <person name="Song X.-Z."/>
            <person name="Li B."/>
            <person name="Liu Y."/>
            <person name="Qin X."/>
            <person name="Cawley S."/>
            <person name="Cooney A.J."/>
            <person name="D'Souza L.M."/>
            <person name="Martin K."/>
            <person name="Wu J.Q."/>
            <person name="Gonzalez-Garay M.L."/>
            <person name="Jackson A.R."/>
            <person name="Kalafus K.J."/>
            <person name="McLeod M.P."/>
            <person name="Milosavljevic A."/>
            <person name="Virk D."/>
            <person name="Volkov A."/>
            <person name="Wheeler D.A."/>
            <person name="Zhang Z."/>
            <person name="Bailey J.A."/>
            <person name="Eichler E.E."/>
            <person name="Tuzun E."/>
            <person name="Birney E."/>
            <person name="Mongin E."/>
            <person name="Ureta-Vidal A."/>
            <person name="Woodwark C."/>
            <person name="Zdobnov E."/>
            <person name="Bork P."/>
            <person name="Suyama M."/>
            <person name="Torrents D."/>
            <person name="Alexandersson M."/>
            <person name="Trask B.J."/>
            <person name="Young J.M."/>
            <person name="Huang H."/>
            <person name="Wang H."/>
            <person name="Xing H."/>
            <person name="Daniels S."/>
            <person name="Gietzen D."/>
            <person name="Schmidt J."/>
            <person name="Stevens K."/>
            <person name="Vitt U."/>
            <person name="Wingrove J."/>
            <person name="Camara F."/>
            <person name="Mar Alba M."/>
            <person name="Abril J.F."/>
            <person name="Guigo R."/>
            <person name="Smit A."/>
            <person name="Dubchak I."/>
            <person name="Rubin E.M."/>
            <person name="Couronne O."/>
            <person name="Poliakov A."/>
            <person name="Huebner N."/>
            <person name="Ganten D."/>
            <person name="Goesele C."/>
            <person name="Hummel O."/>
            <person name="Kreitler T."/>
            <person name="Lee Y.-A."/>
            <person name="Monti J."/>
            <person name="Schulz H."/>
            <person name="Zimdahl H."/>
            <person name="Himmelbauer H."/>
            <person name="Lehrach H."/>
            <person name="Jacob H.J."/>
            <person name="Bromberg S."/>
            <person name="Gullings-Handley J."/>
            <person name="Jensen-Seaman M.I."/>
            <person name="Kwitek A.E."/>
            <person name="Lazar J."/>
            <person name="Pasko D."/>
            <person name="Tonellato P.J."/>
            <person name="Twigger S."/>
            <person name="Ponting C.P."/>
            <person name="Duarte J.M."/>
            <person name="Rice S."/>
            <person name="Goodstadt L."/>
            <person name="Beatson S.A."/>
            <person name="Emes R.D."/>
            <person name="Winter E.E."/>
            <person name="Webber C."/>
            <person name="Brandt P."/>
            <person name="Nyakatura G."/>
            <person name="Adetobi M."/>
            <person name="Chiaromonte F."/>
            <person name="Elnitski L."/>
            <person name="Eswara P."/>
            <person name="Hardison R.C."/>
            <person name="Hou M."/>
            <person name="Kolbe D."/>
            <person name="Makova K."/>
            <person name="Miller W."/>
            <person name="Nekrutenko A."/>
            <person name="Riemer C."/>
            <person name="Schwartz S."/>
            <person name="Taylor J."/>
            <person name="Yang S."/>
            <person name="Zhang Y."/>
            <person name="Lindpaintner K."/>
            <person name="Andrews T.D."/>
            <person name="Caccamo M."/>
            <person name="Clamp M."/>
            <person name="Clarke L."/>
            <person name="Curwen V."/>
            <person name="Durbin R.M."/>
            <person name="Eyras E."/>
            <person name="Searle S.M."/>
            <person name="Cooper G.M."/>
            <person name="Batzoglou S."/>
            <person name="Brudno M."/>
            <person name="Sidow A."/>
            <person name="Stone E.A."/>
            <person name="Payseur B.A."/>
            <person name="Bourque G."/>
            <person name="Lopez-Otin C."/>
            <person name="Puente X.S."/>
            <person name="Chakrabarti K."/>
            <person name="Chatterji S."/>
            <person name="Dewey C."/>
            <person name="Pachter L."/>
            <person name="Bray N."/>
            <person name="Yap V.B."/>
            <person name="Caspi A."/>
            <person name="Tesler G."/>
            <person name="Pevzner P.A."/>
            <person name="Haussler D."/>
            <person name="Roskin K.M."/>
            <person name="Baertsch R."/>
            <person name="Clawson H."/>
            <person name="Furey T.S."/>
            <person name="Hinrichs A.S."/>
            <person name="Karolchik D."/>
            <person name="Kent W.J."/>
            <person name="Rosenbloom K.R."/>
            <person name="Trumbower H."/>
            <person name="Weirauch M."/>
            <person name="Cooper D.N."/>
            <person name="Stenson P.D."/>
            <person name="Ma B."/>
            <person name="Brent M."/>
            <person name="Arumugam M."/>
            <person name="Shteynberg D."/>
            <person name="Copley R.R."/>
            <person name="Taylor M.S."/>
            <person name="Riethman H."/>
            <person name="Mudunuri U."/>
            <person name="Peterson J."/>
            <person name="Guyer M."/>
            <person name="Felsenfeld A."/>
            <person name="Old S."/>
            <person name="Mockrin S."/>
            <person name="Collins F.S."/>
        </authorList>
    </citation>
    <scope>NUCLEOTIDE SEQUENCE [LARGE SCALE GENOMIC DNA]</scope>
    <source>
        <strain evidence="8">Brown Norway</strain>
    </source>
</reference>
<reference key="3">
    <citation type="submission" date="2005-09" db="EMBL/GenBank/DDBJ databases">
        <authorList>
            <person name="Mural R.J."/>
            <person name="Adams M.D."/>
            <person name="Myers E.W."/>
            <person name="Smith H.O."/>
            <person name="Venter J.C."/>
        </authorList>
    </citation>
    <scope>NUCLEOTIDE SEQUENCE [LARGE SCALE GENOMIC DNA]</scope>
</reference>
<reference evidence="11 13" key="4">
    <citation type="submission" date="2007-06" db="EMBL/GenBank/DDBJ databases">
        <authorList>
            <person name="Sun F.P."/>
            <person name="Gao T.M."/>
        </authorList>
    </citation>
    <scope>NUCLEOTIDE SEQUENCE [MRNA] OF 749-866</scope>
    <source>
        <strain evidence="13">Sprague-Dawley</strain>
    </source>
</reference>
<reference key="5">
    <citation type="journal article" date="2002" name="Nat. Cell Biol.">
        <title>The TRPM7 channel is inactivated by PIP(2) hydrolysis.</title>
        <authorList>
            <person name="Runnels L.W."/>
            <person name="Yue L."/>
            <person name="Clapham D.E."/>
        </authorList>
    </citation>
    <scope>ACTIVITY REGULATION</scope>
</reference>
<reference evidence="11" key="6">
    <citation type="journal article" date="2008" name="J. Mol. Biol.">
        <title>X-ray crystal structure of a TRPM assembly domain reveals an antiparallel four-stranded coiled-coil.</title>
        <authorList>
            <person name="Fujiwara Y."/>
            <person name="Minor D.L. Jr."/>
        </authorList>
    </citation>
    <scope>X-RAY CRYSTALLOGRAPHY (2.01 ANGSTROMS) OF 1198-1248</scope>
    <scope>COILED-COIL DOMAIN</scope>
</reference>
<proteinExistence type="evidence at protein level"/>
<evidence type="ECO:0000250" key="1">
    <source>
        <dbReference type="UniProtKB" id="Q923J1"/>
    </source>
</evidence>
<evidence type="ECO:0000250" key="2">
    <source>
        <dbReference type="UniProtKB" id="Q96QT4"/>
    </source>
</evidence>
<evidence type="ECO:0000255" key="3"/>
<evidence type="ECO:0000255" key="4">
    <source>
        <dbReference type="PROSITE-ProRule" id="PRU00501"/>
    </source>
</evidence>
<evidence type="ECO:0000256" key="5">
    <source>
        <dbReference type="SAM" id="MobiDB-lite"/>
    </source>
</evidence>
<evidence type="ECO:0000269" key="6">
    <source>
    </source>
</evidence>
<evidence type="ECO:0000269" key="7">
    <source>
    </source>
</evidence>
<evidence type="ECO:0000269" key="8">
    <source>
    </source>
</evidence>
<evidence type="ECO:0000269" key="9">
    <source>
    </source>
</evidence>
<evidence type="ECO:0000303" key="10">
    <source>
    </source>
</evidence>
<evidence type="ECO:0000305" key="11"/>
<evidence type="ECO:0000312" key="12">
    <source>
        <dbReference type="EMBL" id="AAK54810.1"/>
    </source>
</evidence>
<evidence type="ECO:0000312" key="13">
    <source>
        <dbReference type="EMBL" id="ABS12242.1"/>
    </source>
</evidence>
<evidence type="ECO:0000312" key="14">
    <source>
        <dbReference type="RGD" id="620053"/>
    </source>
</evidence>
<evidence type="ECO:0007829" key="15">
    <source>
        <dbReference type="PDB" id="3E7K"/>
    </source>
</evidence>
<organism>
    <name type="scientific">Rattus norvegicus</name>
    <name type="common">Rat</name>
    <dbReference type="NCBI Taxonomy" id="10116"/>
    <lineage>
        <taxon>Eukaryota</taxon>
        <taxon>Metazoa</taxon>
        <taxon>Chordata</taxon>
        <taxon>Craniata</taxon>
        <taxon>Vertebrata</taxon>
        <taxon>Euteleostomi</taxon>
        <taxon>Mammalia</taxon>
        <taxon>Eutheria</taxon>
        <taxon>Euarchontoglires</taxon>
        <taxon>Glires</taxon>
        <taxon>Rodentia</taxon>
        <taxon>Myomorpha</taxon>
        <taxon>Muroidea</taxon>
        <taxon>Muridae</taxon>
        <taxon>Murinae</taxon>
        <taxon>Rattus</taxon>
    </lineage>
</organism>
<dbReference type="EC" id="2.7.11.1" evidence="1"/>
<dbReference type="EMBL" id="AF375874">
    <property type="protein sequence ID" value="AAK54810.1"/>
    <property type="molecule type" value="mRNA"/>
</dbReference>
<dbReference type="EMBL" id="AABR07053661">
    <property type="status" value="NOT_ANNOTATED_CDS"/>
    <property type="molecule type" value="Genomic_DNA"/>
</dbReference>
<dbReference type="EMBL" id="AABR07053662">
    <property type="status" value="NOT_ANNOTATED_CDS"/>
    <property type="molecule type" value="Genomic_DNA"/>
</dbReference>
<dbReference type="EMBL" id="AABR07053663">
    <property type="status" value="NOT_ANNOTATED_CDS"/>
    <property type="molecule type" value="Genomic_DNA"/>
</dbReference>
<dbReference type="EMBL" id="AABR07053664">
    <property type="status" value="NOT_ANNOTATED_CDS"/>
    <property type="molecule type" value="Genomic_DNA"/>
</dbReference>
<dbReference type="EMBL" id="AABR07053665">
    <property type="status" value="NOT_ANNOTATED_CDS"/>
    <property type="molecule type" value="Genomic_DNA"/>
</dbReference>
<dbReference type="EMBL" id="AABR03029588">
    <property type="status" value="NOT_ANNOTATED_CDS"/>
    <property type="molecule type" value="Genomic_DNA"/>
</dbReference>
<dbReference type="EMBL" id="AABR03030279">
    <property type="status" value="NOT_ANNOTATED_CDS"/>
    <property type="molecule type" value="Genomic_DNA"/>
</dbReference>
<dbReference type="EMBL" id="AABR03031904">
    <property type="status" value="NOT_ANNOTATED_CDS"/>
    <property type="molecule type" value="Genomic_DNA"/>
</dbReference>
<dbReference type="EMBL" id="EF673694">
    <property type="protein sequence ID" value="ABS12242.1"/>
    <property type="molecule type" value="mRNA"/>
</dbReference>
<dbReference type="EMBL" id="CH473949">
    <property type="protein sequence ID" value="EDL80094.1"/>
    <property type="molecule type" value="Genomic_DNA"/>
</dbReference>
<dbReference type="RefSeq" id="NP_446157.2">
    <molecule id="Q925B3-1"/>
    <property type="nucleotide sequence ID" value="NM_053705.2"/>
</dbReference>
<dbReference type="RefSeq" id="XP_038961765.1">
    <molecule id="Q925B3-3"/>
    <property type="nucleotide sequence ID" value="XM_039105837.2"/>
</dbReference>
<dbReference type="PDB" id="3E7K">
    <property type="method" value="X-ray"/>
    <property type="resolution" value="2.01 A"/>
    <property type="chains" value="A/B/C/D/E/F/G/H=1198-1249"/>
</dbReference>
<dbReference type="PDBsum" id="3E7K"/>
<dbReference type="SMR" id="Q925B3"/>
<dbReference type="FunCoup" id="Q925B3">
    <property type="interactions" value="3348"/>
</dbReference>
<dbReference type="IntAct" id="Q925B3">
    <property type="interactions" value="1"/>
</dbReference>
<dbReference type="MINT" id="Q925B3"/>
<dbReference type="STRING" id="10116.ENSRNOP00000070727"/>
<dbReference type="ChEMBL" id="CHEMBL3721309"/>
<dbReference type="GuidetoPHARMACOLOGY" id="499"/>
<dbReference type="CarbonylDB" id="Q925B3"/>
<dbReference type="iPTMnet" id="Q925B3"/>
<dbReference type="PhosphoSitePlus" id="Q925B3"/>
<dbReference type="SwissPalm" id="Q925B3"/>
<dbReference type="PaxDb" id="10116-ENSRNOP00000034169"/>
<dbReference type="ABCD" id="Q925B3">
    <property type="antibodies" value="1 sequenced antibody"/>
</dbReference>
<dbReference type="Ensembl" id="ENSRNOT00000111052.1">
    <molecule id="Q925B3-3"/>
    <property type="protein sequence ID" value="ENSRNOP00000092648.1"/>
    <property type="gene ID" value="ENSRNOG00000057806.2"/>
</dbReference>
<dbReference type="Ensembl" id="ENSRNOT00055008471">
    <molecule id="Q925B3-3"/>
    <property type="protein sequence ID" value="ENSRNOP00055006420"/>
    <property type="gene ID" value="ENSRNOG00055005258"/>
</dbReference>
<dbReference type="Ensembl" id="ENSRNOT00060024764">
    <molecule id="Q925B3-3"/>
    <property type="protein sequence ID" value="ENSRNOP00060019727"/>
    <property type="gene ID" value="ENSRNOG00060014340"/>
</dbReference>
<dbReference type="Ensembl" id="ENSRNOT00065020985">
    <molecule id="Q925B3-3"/>
    <property type="protein sequence ID" value="ENSRNOP00065016189"/>
    <property type="gene ID" value="ENSRNOG00065012816"/>
</dbReference>
<dbReference type="GeneID" id="679906"/>
<dbReference type="KEGG" id="rno:679906"/>
<dbReference type="UCSC" id="RGD:620053">
    <molecule id="Q925B3-1"/>
    <property type="organism name" value="rat"/>
</dbReference>
<dbReference type="AGR" id="RGD:620053"/>
<dbReference type="CTD" id="54822"/>
<dbReference type="RGD" id="620053">
    <property type="gene designation" value="Trpm7"/>
</dbReference>
<dbReference type="eggNOG" id="KOG3614">
    <property type="taxonomic scope" value="Eukaryota"/>
</dbReference>
<dbReference type="GeneTree" id="ENSGT00940000157091"/>
<dbReference type="InParanoid" id="Q925B3"/>
<dbReference type="OMA" id="SSKDPHX"/>
<dbReference type="PhylomeDB" id="Q925B3"/>
<dbReference type="Reactome" id="R-RNO-3295583">
    <property type="pathway name" value="TRP channels"/>
</dbReference>
<dbReference type="EvolutionaryTrace" id="Q925B3"/>
<dbReference type="PRO" id="PR:Q925B3"/>
<dbReference type="Proteomes" id="UP000002494">
    <property type="component" value="Chromosome 3"/>
</dbReference>
<dbReference type="Proteomes" id="UP000234681">
    <property type="component" value="Chromosome 3"/>
</dbReference>
<dbReference type="GO" id="GO:0031410">
    <property type="term" value="C:cytoplasmic vesicle"/>
    <property type="evidence" value="ECO:0000266"/>
    <property type="project" value="RGD"/>
</dbReference>
<dbReference type="GO" id="GO:0043025">
    <property type="term" value="C:neuronal cell body"/>
    <property type="evidence" value="ECO:0000314"/>
    <property type="project" value="RGD"/>
</dbReference>
<dbReference type="GO" id="GO:0005634">
    <property type="term" value="C:nucleus"/>
    <property type="evidence" value="ECO:0000250"/>
    <property type="project" value="UniProtKB"/>
</dbReference>
<dbReference type="GO" id="GO:0005886">
    <property type="term" value="C:plasma membrane"/>
    <property type="evidence" value="ECO:0000266"/>
    <property type="project" value="RGD"/>
</dbReference>
<dbReference type="GO" id="GO:0001726">
    <property type="term" value="C:ruffle"/>
    <property type="evidence" value="ECO:0000266"/>
    <property type="project" value="RGD"/>
</dbReference>
<dbReference type="GO" id="GO:0030672">
    <property type="term" value="C:synaptic vesicle membrane"/>
    <property type="evidence" value="ECO:0000314"/>
    <property type="project" value="RGD"/>
</dbReference>
<dbReference type="GO" id="GO:0043196">
    <property type="term" value="C:varicosity"/>
    <property type="evidence" value="ECO:0000314"/>
    <property type="project" value="RGD"/>
</dbReference>
<dbReference type="GO" id="GO:0003779">
    <property type="term" value="F:actin binding"/>
    <property type="evidence" value="ECO:0000266"/>
    <property type="project" value="RGD"/>
</dbReference>
<dbReference type="GO" id="GO:0005524">
    <property type="term" value="F:ATP binding"/>
    <property type="evidence" value="ECO:0007669"/>
    <property type="project" value="UniProtKB-KW"/>
</dbReference>
<dbReference type="GO" id="GO:0005262">
    <property type="term" value="F:calcium channel activity"/>
    <property type="evidence" value="ECO:0000314"/>
    <property type="project" value="RGD"/>
</dbReference>
<dbReference type="GO" id="GO:0016301">
    <property type="term" value="F:kinase activity"/>
    <property type="evidence" value="ECO:0000266"/>
    <property type="project" value="RGD"/>
</dbReference>
<dbReference type="GO" id="GO:0015095">
    <property type="term" value="F:magnesium ion transmembrane transporter activity"/>
    <property type="evidence" value="ECO:0000266"/>
    <property type="project" value="RGD"/>
</dbReference>
<dbReference type="GO" id="GO:0046872">
    <property type="term" value="F:metal ion binding"/>
    <property type="evidence" value="ECO:0007669"/>
    <property type="project" value="UniProtKB-KW"/>
</dbReference>
<dbReference type="GO" id="GO:0005261">
    <property type="term" value="F:monoatomic cation channel activity"/>
    <property type="evidence" value="ECO:0000314"/>
    <property type="project" value="RGD"/>
</dbReference>
<dbReference type="GO" id="GO:0017022">
    <property type="term" value="F:myosin binding"/>
    <property type="evidence" value="ECO:0000266"/>
    <property type="project" value="RGD"/>
</dbReference>
<dbReference type="GO" id="GO:0004672">
    <property type="term" value="F:protein kinase activity"/>
    <property type="evidence" value="ECO:0000314"/>
    <property type="project" value="RGD"/>
</dbReference>
<dbReference type="GO" id="GO:0106310">
    <property type="term" value="F:protein serine kinase activity"/>
    <property type="evidence" value="ECO:0007669"/>
    <property type="project" value="RHEA"/>
</dbReference>
<dbReference type="GO" id="GO:0004674">
    <property type="term" value="F:protein serine/threonine kinase activity"/>
    <property type="evidence" value="ECO:0000250"/>
    <property type="project" value="UniProtKB"/>
</dbReference>
<dbReference type="GO" id="GO:0005385">
    <property type="term" value="F:zinc ion transmembrane transporter activity"/>
    <property type="evidence" value="ECO:0000266"/>
    <property type="project" value="RGD"/>
</dbReference>
<dbReference type="GO" id="GO:0031032">
    <property type="term" value="P:actomyosin structure organization"/>
    <property type="evidence" value="ECO:0000266"/>
    <property type="project" value="RGD"/>
</dbReference>
<dbReference type="GO" id="GO:0070588">
    <property type="term" value="P:calcium ion transmembrane transport"/>
    <property type="evidence" value="ECO:0000266"/>
    <property type="project" value="RGD"/>
</dbReference>
<dbReference type="GO" id="GO:0006816">
    <property type="term" value="P:calcium ion transport"/>
    <property type="evidence" value="ECO:0000314"/>
    <property type="project" value="RGD"/>
</dbReference>
<dbReference type="GO" id="GO:0016340">
    <property type="term" value="P:calcium-dependent cell-matrix adhesion"/>
    <property type="evidence" value="ECO:0000266"/>
    <property type="project" value="RGD"/>
</dbReference>
<dbReference type="GO" id="GO:0010961">
    <property type="term" value="P:intracellular magnesium ion homeostasis"/>
    <property type="evidence" value="ECO:0000315"/>
    <property type="project" value="RGD"/>
</dbReference>
<dbReference type="GO" id="GO:0010960">
    <property type="term" value="P:magnesium ion homeostasis"/>
    <property type="evidence" value="ECO:0000266"/>
    <property type="project" value="RGD"/>
</dbReference>
<dbReference type="GO" id="GO:1903830">
    <property type="term" value="P:magnesium ion transmembrane transport"/>
    <property type="evidence" value="ECO:0000266"/>
    <property type="project" value="RGD"/>
</dbReference>
<dbReference type="GO" id="GO:0015693">
    <property type="term" value="P:magnesium ion transport"/>
    <property type="evidence" value="ECO:0000250"/>
    <property type="project" value="UniProtKB"/>
</dbReference>
<dbReference type="GO" id="GO:0007613">
    <property type="term" value="P:memory"/>
    <property type="evidence" value="ECO:0000315"/>
    <property type="project" value="RGD"/>
</dbReference>
<dbReference type="GO" id="GO:0055080">
    <property type="term" value="P:monoatomic cation homeostasis"/>
    <property type="evidence" value="ECO:0000318"/>
    <property type="project" value="GO_Central"/>
</dbReference>
<dbReference type="GO" id="GO:0098655">
    <property type="term" value="P:monoatomic cation transmembrane transport"/>
    <property type="evidence" value="ECO:0000318"/>
    <property type="project" value="GO_Central"/>
</dbReference>
<dbReference type="GO" id="GO:0070266">
    <property type="term" value="P:necroptotic process"/>
    <property type="evidence" value="ECO:0000250"/>
    <property type="project" value="UniProtKB"/>
</dbReference>
<dbReference type="GO" id="GO:0043065">
    <property type="term" value="P:positive regulation of apoptotic process"/>
    <property type="evidence" value="ECO:0000315"/>
    <property type="project" value="RGD"/>
</dbReference>
<dbReference type="GO" id="GO:0046777">
    <property type="term" value="P:protein autophosphorylation"/>
    <property type="evidence" value="ECO:0000250"/>
    <property type="project" value="UniProtKB"/>
</dbReference>
<dbReference type="GO" id="GO:0051289">
    <property type="term" value="P:protein homotetramerization"/>
    <property type="evidence" value="ECO:0000250"/>
    <property type="project" value="UniProtKB"/>
</dbReference>
<dbReference type="GO" id="GO:0006829">
    <property type="term" value="P:zinc ion transport"/>
    <property type="evidence" value="ECO:0000250"/>
    <property type="project" value="UniProtKB"/>
</dbReference>
<dbReference type="CDD" id="cd16971">
    <property type="entry name" value="Alpha_kinase_ChaK1_TRMP7"/>
    <property type="match status" value="1"/>
</dbReference>
<dbReference type="FunFam" id="1.20.5.1010:FF:000002">
    <property type="entry name" value="Transient receptor potential cation channel subfamily M member 7"/>
    <property type="match status" value="1"/>
</dbReference>
<dbReference type="FunFam" id="3.20.200.10:FF:000001">
    <property type="entry name" value="Transient receptor potential cation channel, subfamily M, member 7"/>
    <property type="match status" value="1"/>
</dbReference>
<dbReference type="FunFam" id="3.30.200.20:FF:000129">
    <property type="entry name" value="Transient receptor potential cation channel, subfamily M, member 7"/>
    <property type="match status" value="1"/>
</dbReference>
<dbReference type="Gene3D" id="3.20.200.10">
    <property type="entry name" value="MHCK/EF2 kinase"/>
    <property type="match status" value="1"/>
</dbReference>
<dbReference type="Gene3D" id="3.30.200.20">
    <property type="entry name" value="Phosphorylase Kinase, domain 1"/>
    <property type="match status" value="1"/>
</dbReference>
<dbReference type="Gene3D" id="1.20.5.1010">
    <property type="entry name" value="TRPM, tetramerisation domain"/>
    <property type="match status" value="1"/>
</dbReference>
<dbReference type="InterPro" id="IPR004166">
    <property type="entry name" value="a-kinase_dom"/>
</dbReference>
<dbReference type="InterPro" id="IPR005821">
    <property type="entry name" value="Ion_trans_dom"/>
</dbReference>
<dbReference type="InterPro" id="IPR011009">
    <property type="entry name" value="Kinase-like_dom_sf"/>
</dbReference>
<dbReference type="InterPro" id="IPR050927">
    <property type="entry name" value="TRPM"/>
</dbReference>
<dbReference type="InterPro" id="IPR029601">
    <property type="entry name" value="TRPM7_a-kinase_dom"/>
</dbReference>
<dbReference type="InterPro" id="IPR041491">
    <property type="entry name" value="TRPM_SLOG"/>
</dbReference>
<dbReference type="InterPro" id="IPR032415">
    <property type="entry name" value="TRPM_tetra"/>
</dbReference>
<dbReference type="InterPro" id="IPR037162">
    <property type="entry name" value="TRPM_tetra_sf"/>
</dbReference>
<dbReference type="PANTHER" id="PTHR13800:SF8">
    <property type="entry name" value="TRANSIENT RECEPTOR POTENTIAL CATION CHANNEL SUBFAMILY M MEMBER 7"/>
    <property type="match status" value="1"/>
</dbReference>
<dbReference type="PANTHER" id="PTHR13800">
    <property type="entry name" value="TRANSIENT RECEPTOR POTENTIAL CATION CHANNEL, SUBFAMILY M, MEMBER 6"/>
    <property type="match status" value="1"/>
</dbReference>
<dbReference type="Pfam" id="PF02816">
    <property type="entry name" value="Alpha_kinase"/>
    <property type="match status" value="1"/>
</dbReference>
<dbReference type="Pfam" id="PF00520">
    <property type="entry name" value="Ion_trans"/>
    <property type="match status" value="1"/>
</dbReference>
<dbReference type="Pfam" id="PF18139">
    <property type="entry name" value="LSDAT_euk"/>
    <property type="match status" value="1"/>
</dbReference>
<dbReference type="Pfam" id="PF25508">
    <property type="entry name" value="TRPM2"/>
    <property type="match status" value="2"/>
</dbReference>
<dbReference type="Pfam" id="PF16519">
    <property type="entry name" value="TRPM_tetra"/>
    <property type="match status" value="1"/>
</dbReference>
<dbReference type="SMART" id="SM00811">
    <property type="entry name" value="Alpha_kinase"/>
    <property type="match status" value="1"/>
</dbReference>
<dbReference type="SUPFAM" id="SSF56112">
    <property type="entry name" value="Protein kinase-like (PK-like)"/>
    <property type="match status" value="1"/>
</dbReference>
<dbReference type="PROSITE" id="PS51158">
    <property type="entry name" value="ALPHA_KINASE"/>
    <property type="match status" value="1"/>
</dbReference>
<comment type="function">
    <text evidence="1 2">Bifunctional protein that combines an ion channel with an intrinsic kinase domain, enabling it to modulate cellular functions either by conducting ions through the pore or by phosphorylating downstream proteins via its kinase domain. The channel is highly permeable to divalent cations, specifically calcium (Ca2+), magnesium (Mg2+) and zinc (Zn2+) and mediates their influx. Controls a wide range of biological processes such as Ca2(+), Mg(2+) and Zn(2+) homeostasis, vesicular Zn(2+) release channel and intracellular Ca(2+) signaling, embryonic development, immune responses, cell motility, proliferation and differentiation. The C-terminal alpha-kinase domain autophosphorylates cytoplasmic residues of TRPM7. TRPM7 phosphorylates SMAD2, suggesting that TRPM7 kinase may play a role in activating SMAD signaling pathways (By similarity). In vitro, TRPM7 kinase phosphorylates ANXA1 (annexin A1), myosin II isoforms and a variety of proteins with diverse cellular functions (By similarity).</text>
</comment>
<comment type="function">
    <molecule>TRPM7 channel, cleaved form</molecule>
    <text evidence="1">The cleaved channel exhibits substantially higher current and potentiates Fas receptor signaling.</text>
</comment>
<comment type="function">
    <molecule>TRPM7 kinase, cleaved form</molecule>
    <text evidence="1">The C-terminal kinase domain can be cleaved from the channel segment in a cell-type-specific fashion. In immune cells, the TRPM7 kinase domain is clipped from the channel domain by caspases in response to Fas-receptor stimulation. The cleaved kinase fragments can translocate to the nucleus, and bind chromatin-remodeling complex proteins in a Zn(2+)-dependent manner to ultimately phosphorylate specific Ser/Thr residues of histones known to be functionally important for cell differentiation and embryonic development.</text>
</comment>
<comment type="catalytic activity">
    <reaction evidence="1">
        <text>L-seryl-[protein] + ATP = O-phospho-L-seryl-[protein] + ADP + H(+)</text>
        <dbReference type="Rhea" id="RHEA:17989"/>
        <dbReference type="Rhea" id="RHEA-COMP:9863"/>
        <dbReference type="Rhea" id="RHEA-COMP:11604"/>
        <dbReference type="ChEBI" id="CHEBI:15378"/>
        <dbReference type="ChEBI" id="CHEBI:29999"/>
        <dbReference type="ChEBI" id="CHEBI:30616"/>
        <dbReference type="ChEBI" id="CHEBI:83421"/>
        <dbReference type="ChEBI" id="CHEBI:456216"/>
        <dbReference type="EC" id="2.7.11.1"/>
    </reaction>
</comment>
<comment type="catalytic activity">
    <reaction evidence="1">
        <text>L-threonyl-[protein] + ATP = O-phospho-L-threonyl-[protein] + ADP + H(+)</text>
        <dbReference type="Rhea" id="RHEA:46608"/>
        <dbReference type="Rhea" id="RHEA-COMP:11060"/>
        <dbReference type="Rhea" id="RHEA-COMP:11605"/>
        <dbReference type="ChEBI" id="CHEBI:15378"/>
        <dbReference type="ChEBI" id="CHEBI:30013"/>
        <dbReference type="ChEBI" id="CHEBI:30616"/>
        <dbReference type="ChEBI" id="CHEBI:61977"/>
        <dbReference type="ChEBI" id="CHEBI:456216"/>
        <dbReference type="EC" id="2.7.11.1"/>
    </reaction>
</comment>
<comment type="catalytic activity">
    <reaction evidence="1">
        <text>Mg(2+)(in) = Mg(2+)(out)</text>
        <dbReference type="Rhea" id="RHEA:29827"/>
        <dbReference type="ChEBI" id="CHEBI:18420"/>
    </reaction>
</comment>
<comment type="catalytic activity">
    <reaction evidence="1">
        <text>Ca(2+)(in) = Ca(2+)(out)</text>
        <dbReference type="Rhea" id="RHEA:29671"/>
        <dbReference type="ChEBI" id="CHEBI:29108"/>
    </reaction>
</comment>
<comment type="catalytic activity">
    <reaction evidence="1">
        <text>Zn(2+)(in) = Zn(2+)(out)</text>
        <dbReference type="Rhea" id="RHEA:29351"/>
        <dbReference type="ChEBI" id="CHEBI:29105"/>
    </reaction>
</comment>
<comment type="cofactor">
    <cofactor evidence="1">
        <name>Zn(2+)</name>
        <dbReference type="ChEBI" id="CHEBI:29105"/>
    </cofactor>
    <text evidence="1">Binds 1 zinc ion per subunit.</text>
</comment>
<comment type="activity regulation">
    <text evidence="1 7">Channel displays constitutive activity. Channel activity is negatively regulated by cytosolic Mg(2+), Mg-ATP, low intracellular pH. Resting free cytosolic Mg(2+) and Mg-ATP concentrations seem to be sufficient to block native TRPM7 channel activity (By similarity). TRPM7 channel activity is highly dependent on membrane levels of phosphatidylinositol 4,5 bisphosphate (PIP2) (By similarity). PIP2 hydrolysis negatively regulates TRPM7 channel activity (PubMed:11941371). TRPM7 kinase activity does not affect channel activity. The kinase activity is controlled through the autophosphorylation of a serine/threonine-rich region located N-terminal to the catalytic domain (By similarity).</text>
</comment>
<comment type="subunit">
    <text evidence="1 6">Homodimer. Homotetramer. Forms heteromers with TRPM6; heteromeric channels are functionally different from the homomeric channels (By similarity). Interacts with PLCB1 (PubMed:11161216).</text>
</comment>
<comment type="subcellular location">
    <subcellularLocation>
        <location evidence="2">Cell membrane</location>
        <topology evidence="1">Multi-pass membrane protein</topology>
    </subcellularLocation>
    <subcellularLocation>
        <location evidence="1">Cytoplasmic vesicle membrane</location>
        <topology evidence="1">Multi-pass membrane protein</topology>
    </subcellularLocation>
    <text evidence="1">Localized largely in intracellular Zn(2+)-storage vesicles.</text>
</comment>
<comment type="subcellular location">
    <molecule>TRPM7 kinase, cleaved form</molecule>
    <subcellularLocation>
        <location evidence="1">Nucleus</location>
    </subcellularLocation>
</comment>
<comment type="alternative products">
    <event type="alternative splicing"/>
    <isoform>
        <id>Q925B3-1</id>
        <name evidence="11">1</name>
        <name evidence="6">TRP-PLIK</name>
        <sequence type="displayed"/>
    </isoform>
    <isoform>
        <id>Q925B3-2</id>
        <name evidence="6">2</name>
        <name evidence="6">PLIK</name>
        <sequence type="described" ref="VSP_052983 VSP_052984"/>
    </isoform>
    <isoform>
        <id>Q925B3-3</id>
        <name>3</name>
        <sequence type="described" ref="VSP_062426"/>
    </isoform>
</comment>
<comment type="PTM">
    <text evidence="2">Palmitoylated; palmitoylation at Cys-1143, Cys-1144 and Cys-1146 promotes TRPM7 trafficking from the Golgi to the surface membrane.</text>
</comment>
<comment type="PTM">
    <text evidence="2">Autophosphorylated; autophosphorylation regulates TRPM7 kinase activity towards its substrates.</text>
</comment>
<comment type="PTM">
    <text evidence="1">The C-terminal kinase domain can be cleaved from the channel segment in a cell-type-specific fashion. TRPM7 is cleaved by caspase-8, dissociating the kinase from the ion-conducting pore. The cleaved kinase fragments (M7CKs) can translocate to the cell nucleus and binds chromatin-remodeling complex proteins in a Zn(2+)-dependent manner to ultimately phosphorylate specific Ser/Thr residues of histones.</text>
</comment>
<comment type="similarity">
    <text evidence="3">In the C-terminal section; belongs to the protein kinase superfamily. Alpha-type protein kinase family. ALPK subfamily.</text>
</comment>
<comment type="similarity">
    <text evidence="11">In the N-terminal section; belongs to the transient receptor (TC 1.A.4) family. LTrpC subfamily. TRPM7 sub-subfamily.</text>
</comment>
<accession>Q925B3</accession>
<accession>A0A8I6AVX9</accession>
<accession>A6HPZ2</accession>
<accession>A7L642</accession>
<sequence length="1862" mass="212422">MSQKSWIESTLTKRECVYIIPSSKDPHRCLPGCQICQQLVRCFCGRLVKQHACFTASLATKYSDVKLGEHFNQAIEEWSVEKHTEQSPTDAYGVINFQGGSHSYRAKYVRLSYDTKPEIILQLLLKEWQMELPKLVISVHGGMQKFELHPRIKQLLGKGLIKAAVTTGAWILTGGVNTGVAKHVGDALKEHASRSSRKICTIGIAPWGVIENRNDLVGRDVVAPYQTLLNPLSKLNVLNNLHSHFILVDDGTVGKYGAEVRLRRELEKTINQQRIHARIGQGVPVVALIFEGGPNVILTVLEYLQESPPVPVVVCEGTGRAADLLAYIHKQTEEGGNLPDAAEPDIISTIKKTFNFGQSEAVHLFQTMMECMKKKELITVFHIGSEDHQDIDVAILTALLKGTNASAFDQLILTLAWDRVDIAKNHVFVYGQQWLVGSLEQAMLDALVMDRVSFVKLLIENGVSMHKFLTIPRLEELYNTKQGPTNPMLFHLIRDVKQGNLPPGYKITLIDIGLVIEYLMGGTYRCTYTRKRFRLIYNSLGGNNRRSGRNASSSTPQLRKSHETFGNRADKKEKMRHNHFIKTAQPYRPKMDASMEEGKKKRTKDEIVDIDDPETKRFPYPLNELLIWACLMKRQVMARFLWQHGEESMAKALVACKIYRSMAYEAKQSDLVDDTSEELKQYSNDFGQLAVELLEQSFRQDETMAMKLLTYELKNWSNSTCLKLAVSSRLRPFVAHTCTQMLLSDMWMGRLNMRKNSWYKVILSILVPPAILMLEYKTKAEMSHIPQSQDAHQMTMEDSENNFHNITEEIPMEVFKEVKILDSSEGKNEMEIHIKSKKLPITRKFYAFYHAPIVKFWFNTLAYLGFLMLYTFVVLVQMEQLPSVQEWIVIAYIFTYAIEKIREVFMSEAGKISQKIKVWFSDYFNVSDTIAIISFFVGFGLRFGAKWNYINAYDNHVFVAGRLIYCLNIIFWYVRLLDFLAVNQQAGPYVMMIGKMVANMFYIVVIMALVLLSFGVPRKAILYPHEEPSWSLAKDIVFHPYWMIFGEVYAYEIDVCANDSALPTICGPGTWLTPFLQAVYLFVQYIIMVNLLIAFFNNVYLQVKAISNIVWKYQRYHFIMAYHEKPVLPPPLIILSHIVSLFCCICKRRKKDKTSDGPKLFLTEEDQKKLHDFEEQCVEMYFDEKDDKFNSGSEERIRVTFERVEQMSIQIKEVGDRVNYIKRSLQSLDSQIGHLQDLSALTVDTLKTLTAQKASEASKVHNEITRELSISKHLAQNLIDDVPVRPMWKKPSVVNTLSSSLPQGDRESNNPFLCNIFMKDEKDPQYNLFGQDLPVIPQRKEFNIPEAGSSCGALFPSAVSPPELRQRRHGVEMLKIFNKNQKLGSSPNSSPHMSSPPTKFSVSTPSQPSCKSHLESTTKDPEPIFYKAAEGDNIEFGAFVGHRDSMDLQRFKETSNKIRELLSNDTPENTLKHVGAAGYNECHKTPTSLHSEQESCSRRASTEDSPDVDSRAALLPDWLRDRPTNREMPSEGGTLNGLASPFKPVLDTNYYYSAVERNNLMRLSQSIPFVPVPPRGEPVTVYRLEESSPSILNNSMSSWSQLGLCAKIEFLSKEEMGGGLRRAVKVLCTWSEHDVLRSGHLYIIKSFLPEVINTWSSIYKEDTVLHLCLREIQQQRAAQKLTFAFNQMKPKSIPYSPRFLEVFLLYCHSAGQWFAVEECMTGEFRKYNNNNGDEIIPTNTLEEIMLAFSHWTYEYTRGELLVLDLQGVGENLTDPSVIKAEEKRSCDMVFGPANLGEDAIKNFRAKHHCNSCCRKLKLPDLKRNDYTPDKIIFPQDESSDLNLQAGNSTKESEATNSVRLML</sequence>
<gene>
    <name evidence="14" type="primary">Trpm7</name>
</gene>
<keyword id="KW-0002">3D-structure</keyword>
<keyword id="KW-0007">Acetylation</keyword>
<keyword id="KW-0025">Alternative splicing</keyword>
<keyword id="KW-0067">ATP-binding</keyword>
<keyword id="KW-0106">Calcium</keyword>
<keyword id="KW-0107">Calcium channel</keyword>
<keyword id="KW-0109">Calcium transport</keyword>
<keyword id="KW-1003">Cell membrane</keyword>
<keyword id="KW-0175">Coiled coil</keyword>
<keyword id="KW-0968">Cytoplasmic vesicle</keyword>
<keyword id="KW-0407">Ion channel</keyword>
<keyword id="KW-0406">Ion transport</keyword>
<keyword id="KW-0418">Kinase</keyword>
<keyword id="KW-0449">Lipoprotein</keyword>
<keyword id="KW-0472">Membrane</keyword>
<keyword id="KW-0479">Metal-binding</keyword>
<keyword id="KW-1210">Necrosis</keyword>
<keyword id="KW-0547">Nucleotide-binding</keyword>
<keyword id="KW-0539">Nucleus</keyword>
<keyword id="KW-0564">Palmitate</keyword>
<keyword id="KW-0597">Phosphoprotein</keyword>
<keyword id="KW-1185">Reference proteome</keyword>
<keyword id="KW-0723">Serine/threonine-protein kinase</keyword>
<keyword id="KW-0808">Transferase</keyword>
<keyword id="KW-0812">Transmembrane</keyword>
<keyword id="KW-1133">Transmembrane helix</keyword>
<keyword id="KW-0813">Transport</keyword>
<keyword id="KW-0862">Zinc</keyword>
<feature type="chain" id="PRO_0000354664" description="Transient receptor potential cation channel subfamily M member 7">
    <location>
        <begin position="1"/>
        <end position="1862"/>
    </location>
</feature>
<feature type="chain" id="PRO_0000461298" description="TRPM7 channel, cleaved form" evidence="1">
    <location>
        <begin position="1"/>
        <end status="unknown"/>
    </location>
</feature>
<feature type="chain" id="PRO_0000461299" description="TRPM7 kinase, cleaved form" evidence="1">
    <location>
        <begin status="unknown"/>
        <end position="1862"/>
    </location>
</feature>
<feature type="topological domain" description="Cytoplasmic" evidence="11">
    <location>
        <begin position="1"/>
        <end position="850"/>
    </location>
</feature>
<feature type="transmembrane region" description="Helical; Name=1" evidence="1">
    <location>
        <begin position="851"/>
        <end position="876"/>
    </location>
</feature>
<feature type="topological domain" description="Extracellular" evidence="11">
    <location>
        <begin position="877"/>
        <end position="882"/>
    </location>
</feature>
<feature type="transmembrane region" description="Helical; Name=2" evidence="1">
    <location>
        <begin position="883"/>
        <end position="904"/>
    </location>
</feature>
<feature type="topological domain" description="Cytoplasmic" evidence="11">
    <location>
        <begin position="905"/>
        <end position="923"/>
    </location>
</feature>
<feature type="transmembrane region" description="Helical; Name=3" evidence="1">
    <location>
        <begin position="924"/>
        <end position="943"/>
    </location>
</feature>
<feature type="topological domain" description="Extracellular" evidence="11">
    <location>
        <begin position="944"/>
        <end position="956"/>
    </location>
</feature>
<feature type="transmembrane region" description="Helical; Name=4" evidence="1">
    <location>
        <begin position="957"/>
        <end position="980"/>
    </location>
</feature>
<feature type="topological domain" description="Cytoplasmic" evidence="11">
    <location>
        <begin position="981"/>
        <end position="999"/>
    </location>
</feature>
<feature type="transmembrane region" description="Helical; Name=5" evidence="1">
    <location>
        <begin position="1000"/>
        <end position="1023"/>
    </location>
</feature>
<feature type="topological domain" description="Extracellular" evidence="11">
    <location>
        <begin position="1024"/>
        <end position="1025"/>
    </location>
</feature>
<feature type="intramembrane region" description="Pore-forming" evidence="1">
    <location>
        <begin position="1026"/>
        <end position="1066"/>
    </location>
</feature>
<feature type="topological domain" description="Extracellular" evidence="11">
    <location>
        <begin position="1067"/>
        <end position="1069"/>
    </location>
</feature>
<feature type="transmembrane region" description="Helical; Name=6" evidence="1">
    <location>
        <begin position="1070"/>
        <end position="1098"/>
    </location>
</feature>
<feature type="topological domain" description="Cytoplasmic" evidence="11">
    <location>
        <begin position="1099"/>
        <end position="1862"/>
    </location>
</feature>
<feature type="domain" description="Alpha-type protein kinase" evidence="4">
    <location>
        <begin position="1591"/>
        <end position="1821"/>
    </location>
</feature>
<feature type="region of interest" description="Disordered" evidence="5">
    <location>
        <begin position="544"/>
        <end position="574"/>
    </location>
</feature>
<feature type="region of interest" description="Disordered" evidence="5">
    <location>
        <begin position="1380"/>
        <end position="1418"/>
    </location>
</feature>
<feature type="region of interest" description="Disordered" evidence="5">
    <location>
        <begin position="1485"/>
        <end position="1511"/>
    </location>
</feature>
<feature type="region of interest" description="Disordered" evidence="5">
    <location>
        <begin position="1840"/>
        <end position="1862"/>
    </location>
</feature>
<feature type="coiled-coil region" evidence="9">
    <location>
        <begin position="1198"/>
        <end position="1250"/>
    </location>
</feature>
<feature type="compositionally biased region" description="Low complexity" evidence="5">
    <location>
        <begin position="544"/>
        <end position="554"/>
    </location>
</feature>
<feature type="compositionally biased region" description="Basic and acidic residues" evidence="5">
    <location>
        <begin position="560"/>
        <end position="573"/>
    </location>
</feature>
<feature type="compositionally biased region" description="Low complexity" evidence="5">
    <location>
        <begin position="1385"/>
        <end position="1397"/>
    </location>
</feature>
<feature type="compositionally biased region" description="Polar residues" evidence="5">
    <location>
        <begin position="1398"/>
        <end position="1410"/>
    </location>
</feature>
<feature type="compositionally biased region" description="Basic and acidic residues" evidence="5">
    <location>
        <begin position="1491"/>
        <end position="1502"/>
    </location>
</feature>
<feature type="active site" description="Proton acceptor" evidence="1">
    <location>
        <position position="1764"/>
    </location>
</feature>
<feature type="binding site" evidence="1">
    <location>
        <position position="1618"/>
    </location>
    <ligand>
        <name>ADP</name>
        <dbReference type="ChEBI" id="CHEBI:456216"/>
    </ligand>
</feature>
<feature type="binding site" evidence="1">
    <location>
        <position position="1619"/>
    </location>
    <ligand>
        <name>ADP</name>
        <dbReference type="ChEBI" id="CHEBI:456216"/>
    </ligand>
</feature>
<feature type="binding site" evidence="1">
    <location>
        <position position="1620"/>
    </location>
    <ligand>
        <name>ADP</name>
        <dbReference type="ChEBI" id="CHEBI:456216"/>
    </ligand>
</feature>
<feature type="binding site" evidence="1">
    <location>
        <position position="1621"/>
    </location>
    <ligand>
        <name>ADP</name>
        <dbReference type="ChEBI" id="CHEBI:456216"/>
    </ligand>
</feature>
<feature type="binding site" evidence="1">
    <location>
        <position position="1645"/>
    </location>
    <ligand>
        <name>ADP</name>
        <dbReference type="ChEBI" id="CHEBI:456216"/>
    </ligand>
</feature>
<feature type="binding site" evidence="1">
    <location>
        <position position="1717"/>
    </location>
    <ligand>
        <name>ADP</name>
        <dbReference type="ChEBI" id="CHEBI:456216"/>
    </ligand>
</feature>
<feature type="binding site" evidence="1">
    <location>
        <position position="1718"/>
    </location>
    <ligand>
        <name>ADP</name>
        <dbReference type="ChEBI" id="CHEBI:456216"/>
    </ligand>
</feature>
<feature type="binding site" evidence="1">
    <location>
        <position position="1720"/>
    </location>
    <ligand>
        <name>ADP</name>
        <dbReference type="ChEBI" id="CHEBI:456216"/>
    </ligand>
</feature>
<feature type="binding site" evidence="1">
    <location>
        <position position="1750"/>
    </location>
    <ligand>
        <name>Zn(2+)</name>
        <dbReference type="ChEBI" id="CHEBI:29105"/>
    </ligand>
</feature>
<feature type="binding site" evidence="1">
    <location>
        <position position="1774"/>
    </location>
    <ligand>
        <name>ADP</name>
        <dbReference type="ChEBI" id="CHEBI:456216"/>
    </ligand>
</feature>
<feature type="binding site" evidence="1">
    <location>
        <position position="1807"/>
    </location>
    <ligand>
        <name>Zn(2+)</name>
        <dbReference type="ChEBI" id="CHEBI:29105"/>
    </ligand>
</feature>
<feature type="binding site" evidence="1">
    <location>
        <position position="1809"/>
    </location>
    <ligand>
        <name>Zn(2+)</name>
        <dbReference type="ChEBI" id="CHEBI:29105"/>
    </ligand>
</feature>
<feature type="binding site" evidence="1">
    <location>
        <position position="1813"/>
    </location>
    <ligand>
        <name>Zn(2+)</name>
        <dbReference type="ChEBI" id="CHEBI:29105"/>
    </ligand>
</feature>
<feature type="modified residue" description="N-acetylmethionine" evidence="2">
    <location>
        <position position="1"/>
    </location>
</feature>
<feature type="modified residue" description="Phosphoserine" evidence="2">
    <location>
        <position position="101"/>
    </location>
</feature>
<feature type="modified residue" description="Phosphothreonine" evidence="2">
    <location>
        <position position="1163"/>
    </location>
</feature>
<feature type="modified residue" description="Phosphoserine" evidence="2">
    <location>
        <position position="1191"/>
    </location>
</feature>
<feature type="modified residue" description="Phosphoserine" evidence="2">
    <location>
        <position position="1193"/>
    </location>
</feature>
<feature type="modified residue" description="Phosphoserine" evidence="1">
    <location>
        <position position="1224"/>
    </location>
</feature>
<feature type="modified residue" description="Phosphoserine" evidence="1">
    <location>
        <position position="1255"/>
    </location>
</feature>
<feature type="modified residue" description="Phosphoserine" evidence="2">
    <location>
        <position position="1258"/>
    </location>
</feature>
<feature type="modified residue" description="Phosphothreonine" evidence="2">
    <location>
        <position position="1265"/>
    </location>
</feature>
<feature type="modified residue" description="Phosphoserine" evidence="1">
    <location>
        <position position="1300"/>
    </location>
</feature>
<feature type="modified residue" description="Phosphoserine" evidence="2">
    <location>
        <position position="1357"/>
    </location>
</feature>
<feature type="modified residue" description="Phosphoserine" evidence="2">
    <location>
        <position position="1360"/>
    </location>
</feature>
<feature type="modified residue" description="Phosphoserine" evidence="1">
    <location>
        <position position="1385"/>
    </location>
</feature>
<feature type="modified residue" description="Phosphoserine" evidence="2">
    <location>
        <position position="1386"/>
    </location>
</feature>
<feature type="modified residue" description="Phosphoserine" evidence="2">
    <location>
        <position position="1389"/>
    </location>
</feature>
<feature type="modified residue" description="Phosphoserine" evidence="2">
    <location>
        <position position="1394"/>
    </location>
</feature>
<feature type="modified residue" description="Phosphoserine" evidence="2">
    <location>
        <position position="1395"/>
    </location>
</feature>
<feature type="modified residue" description="Phosphoserine" evidence="2">
    <location>
        <position position="1403"/>
    </location>
</feature>
<feature type="modified residue" description="Phosphothreonine" evidence="1">
    <location>
        <position position="1404"/>
    </location>
</feature>
<feature type="modified residue" description="Phosphoserine" evidence="2">
    <location>
        <position position="1406"/>
    </location>
</feature>
<feature type="modified residue" description="Phosphoserine" evidence="1">
    <location>
        <position position="1445"/>
    </location>
</feature>
<feature type="modified residue" description="Phosphothreonine" evidence="2">
    <location>
        <position position="1454"/>
    </location>
</feature>
<feature type="modified residue" description="Phosphoserine" evidence="2">
    <location>
        <position position="1455"/>
    </location>
</feature>
<feature type="modified residue" description="Phosphothreonine" evidence="1">
    <location>
        <position position="1466"/>
    </location>
</feature>
<feature type="modified residue" description="Phosphothreonine" evidence="2">
    <location>
        <position position="1470"/>
    </location>
</feature>
<feature type="modified residue" description="Phosphoserine" evidence="2">
    <location>
        <position position="1491"/>
    </location>
</feature>
<feature type="modified residue" description="Phosphoserine" evidence="1">
    <location>
        <position position="1497"/>
    </location>
</feature>
<feature type="modified residue" description="Phosphoserine" evidence="1">
    <location>
        <position position="1501"/>
    </location>
</feature>
<feature type="modified residue" description="Phosphoserine" evidence="2">
    <location>
        <position position="1510"/>
    </location>
</feature>
<feature type="modified residue" description="Phosphoserine" evidence="2">
    <location>
        <position position="1530"/>
    </location>
</feature>
<feature type="modified residue" description="Phosphothreonine" evidence="2">
    <location>
        <position position="1534"/>
    </location>
</feature>
<feature type="modified residue" description="Phosphoserine" evidence="2">
    <location>
        <position position="1540"/>
    </location>
</feature>
<feature type="modified residue" description="Phosphothreonine" evidence="2">
    <location>
        <position position="1548"/>
    </location>
</feature>
<feature type="modified residue" description="Phosphoserine" evidence="2">
    <location>
        <position position="1564"/>
    </location>
</feature>
<feature type="modified residue" description="Phosphoserine" evidence="2">
    <location>
        <position position="1566"/>
    </location>
</feature>
<feature type="modified residue" description="Phosphothreonine" evidence="2">
    <location>
        <position position="1580"/>
    </location>
</feature>
<feature type="modified residue" description="Phosphoserine" evidence="2">
    <location>
        <position position="1595"/>
    </location>
</feature>
<feature type="modified residue" description="Phosphoserine" evidence="2">
    <location>
        <position position="1612"/>
    </location>
</feature>
<feature type="modified residue" description="Phosphoserine" evidence="2">
    <location>
        <position position="1657"/>
    </location>
</feature>
<feature type="modified residue" description="Phosphothreonine" evidence="2">
    <location>
        <position position="1682"/>
    </location>
</feature>
<feature type="modified residue" description="Phosphoserine" evidence="2">
    <location>
        <position position="1776"/>
    </location>
</feature>
<feature type="modified residue" description="Phosphothreonine" evidence="2">
    <location>
        <position position="1827"/>
    </location>
</feature>
<feature type="modified residue" description="Phosphoserine" evidence="1">
    <location>
        <position position="1848"/>
    </location>
</feature>
<feature type="modified residue" description="Phosphoserine" evidence="2">
    <location>
        <position position="1857"/>
    </location>
</feature>
<feature type="lipid moiety-binding region" description="S-palmitoyl cysteine" evidence="2">
    <location>
        <position position="1143"/>
    </location>
</feature>
<feature type="lipid moiety-binding region" description="S-palmitoyl cysteine" evidence="2">
    <location>
        <position position="1144"/>
    </location>
</feature>
<feature type="lipid moiety-binding region" description="S-palmitoyl cysteine" evidence="2">
    <location>
        <position position="1146"/>
    </location>
</feature>
<feature type="splice variant" id="VSP_052983" description="In isoform 2." evidence="10">
    <location>
        <begin position="1"/>
        <end position="1515"/>
    </location>
</feature>
<feature type="splice variant" id="VSP_062426" description="In isoform 3.">
    <original>M</original>
    <variation>MPAMVVHTFNPSTREAE</variation>
    <location>
        <position position="1"/>
    </location>
</feature>
<feature type="splice variant" id="VSP_052984" description="In isoform 2." evidence="10">
    <original>PDWLRDRPTNREMPSEGGTLN</original>
    <variation>MSELKFILHGCFLKSDLFTIL</variation>
    <location>
        <begin position="1516"/>
        <end position="1536"/>
    </location>
</feature>
<feature type="helix" evidence="15">
    <location>
        <begin position="1198"/>
        <end position="1247"/>
    </location>
</feature>
<protein>
    <recommendedName>
        <fullName evidence="14">Transient receptor potential cation channel subfamily M member 7</fullName>
        <ecNumber evidence="1">2.7.11.1</ecNumber>
    </recommendedName>
    <alternativeName>
        <fullName evidence="2">Long transient receptor potential channel 7</fullName>
        <shortName>LTrpC-7</shortName>
        <shortName evidence="2">LTrpC7</shortName>
    </alternativeName>
    <alternativeName>
        <fullName evidence="10">Transient receptor potential-phospholipase C-interacting kinase</fullName>
        <shortName evidence="10">TRP-PLIK</shortName>
    </alternativeName>
    <component>
        <recommendedName>
            <fullName evidence="1">TRPM7 kinase, cleaved form</fullName>
            <shortName>M7CK</shortName>
        </recommendedName>
    </component>
    <component>
        <recommendedName>
            <fullName evidence="1">TRPM7 channel, cleaved form</fullName>
        </recommendedName>
    </component>
</protein>